<keyword id="KW-0067">ATP-binding</keyword>
<keyword id="KW-0131">Cell cycle</keyword>
<keyword id="KW-0132">Cell division</keyword>
<keyword id="KW-0133">Cell shape</keyword>
<keyword id="KW-0961">Cell wall biogenesis/degradation</keyword>
<keyword id="KW-0963">Cytoplasm</keyword>
<keyword id="KW-0436">Ligase</keyword>
<keyword id="KW-0547">Nucleotide-binding</keyword>
<keyword id="KW-0573">Peptidoglycan synthesis</keyword>
<sequence>MKVIDQFKNKKVLVLGLAKSGESAARLLDKLGAIVTVNDGKPFEDNPAAQSLLEEGIKVITGGHPLELLDEEFALMVKNPGIPYNNPMIEKALAKGIPVLTEVELAYLISEAPIIGITGSNGKTTTTTMIGEVLTAAGQHGLLSGNIGYPASQVAQTASDKDTLVMELSSFQLMGVQEFHPEIAVITNLMPTHIDYHGSFSEYVAAKWNIQNKMTAADFLVLNFNQDLAKDLTSKTEATVVPFSTLEKVDGAYLEDGQLYFRGEVVMAANEIGVPGSHNVENALATIAVAKLRDVDNQTIKETLSAFGGVKHRLQFVDDIKGVKFYNDSKSTNILATQKALSGFDNSKVVLIAGGLDRGNEFDELVPDITGLKKMVILGQSAERVKRAADKAGVAYVEATDIADATRKAYELATQGDVVLLSPANASWDMYANFEVRGDLFIDTVAELKE</sequence>
<organism>
    <name type="scientific">Streptococcus pneumoniae (strain CGSP14)</name>
    <dbReference type="NCBI Taxonomy" id="516950"/>
    <lineage>
        <taxon>Bacteria</taxon>
        <taxon>Bacillati</taxon>
        <taxon>Bacillota</taxon>
        <taxon>Bacilli</taxon>
        <taxon>Lactobacillales</taxon>
        <taxon>Streptococcaceae</taxon>
        <taxon>Streptococcus</taxon>
    </lineage>
</organism>
<gene>
    <name evidence="1" type="primary">murD</name>
    <name type="ordered locus">SPCG_0643</name>
</gene>
<accession>B2IN76</accession>
<comment type="function">
    <text evidence="1">Cell wall formation. Catalyzes the addition of glutamate to the nucleotide precursor UDP-N-acetylmuramoyl-L-alanine (UMA).</text>
</comment>
<comment type="catalytic activity">
    <reaction evidence="1">
        <text>UDP-N-acetyl-alpha-D-muramoyl-L-alanine + D-glutamate + ATP = UDP-N-acetyl-alpha-D-muramoyl-L-alanyl-D-glutamate + ADP + phosphate + H(+)</text>
        <dbReference type="Rhea" id="RHEA:16429"/>
        <dbReference type="ChEBI" id="CHEBI:15378"/>
        <dbReference type="ChEBI" id="CHEBI:29986"/>
        <dbReference type="ChEBI" id="CHEBI:30616"/>
        <dbReference type="ChEBI" id="CHEBI:43474"/>
        <dbReference type="ChEBI" id="CHEBI:83898"/>
        <dbReference type="ChEBI" id="CHEBI:83900"/>
        <dbReference type="ChEBI" id="CHEBI:456216"/>
        <dbReference type="EC" id="6.3.2.9"/>
    </reaction>
</comment>
<comment type="pathway">
    <text evidence="1">Cell wall biogenesis; peptidoglycan biosynthesis.</text>
</comment>
<comment type="subcellular location">
    <subcellularLocation>
        <location evidence="1">Cytoplasm</location>
    </subcellularLocation>
</comment>
<comment type="similarity">
    <text evidence="1">Belongs to the MurCDEF family.</text>
</comment>
<evidence type="ECO:0000255" key="1">
    <source>
        <dbReference type="HAMAP-Rule" id="MF_00639"/>
    </source>
</evidence>
<feature type="chain" id="PRO_1000130876" description="UDP-N-acetylmuramoylalanine--D-glutamate ligase">
    <location>
        <begin position="1"/>
        <end position="450"/>
    </location>
</feature>
<feature type="binding site" evidence="1">
    <location>
        <begin position="119"/>
        <end position="125"/>
    </location>
    <ligand>
        <name>ATP</name>
        <dbReference type="ChEBI" id="CHEBI:30616"/>
    </ligand>
</feature>
<protein>
    <recommendedName>
        <fullName evidence="1">UDP-N-acetylmuramoylalanine--D-glutamate ligase</fullName>
        <ecNumber evidence="1">6.3.2.9</ecNumber>
    </recommendedName>
    <alternativeName>
        <fullName evidence="1">D-glutamic acid-adding enzyme</fullName>
    </alternativeName>
    <alternativeName>
        <fullName evidence="1">UDP-N-acetylmuramoyl-L-alanyl-D-glutamate synthetase</fullName>
    </alternativeName>
</protein>
<proteinExistence type="inferred from homology"/>
<reference key="1">
    <citation type="journal article" date="2009" name="BMC Genomics">
        <title>Genome evolution driven by host adaptations results in a more virulent and antimicrobial-resistant Streptococcus pneumoniae serotype 14.</title>
        <authorList>
            <person name="Ding F."/>
            <person name="Tang P."/>
            <person name="Hsu M.-H."/>
            <person name="Cui P."/>
            <person name="Hu S."/>
            <person name="Yu J."/>
            <person name="Chiu C.-H."/>
        </authorList>
    </citation>
    <scope>NUCLEOTIDE SEQUENCE [LARGE SCALE GENOMIC DNA]</scope>
    <source>
        <strain>CGSP14</strain>
    </source>
</reference>
<dbReference type="EC" id="6.3.2.9" evidence="1"/>
<dbReference type="EMBL" id="CP001033">
    <property type="protein sequence ID" value="ACB89895.1"/>
    <property type="molecule type" value="Genomic_DNA"/>
</dbReference>
<dbReference type="RefSeq" id="WP_000863043.1">
    <property type="nucleotide sequence ID" value="NC_010582.1"/>
</dbReference>
<dbReference type="SMR" id="B2IN76"/>
<dbReference type="KEGG" id="spw:SPCG_0643"/>
<dbReference type="HOGENOM" id="CLU_032540_0_1_9"/>
<dbReference type="UniPathway" id="UPA00219"/>
<dbReference type="GO" id="GO:0005737">
    <property type="term" value="C:cytoplasm"/>
    <property type="evidence" value="ECO:0007669"/>
    <property type="project" value="UniProtKB-SubCell"/>
</dbReference>
<dbReference type="GO" id="GO:0005524">
    <property type="term" value="F:ATP binding"/>
    <property type="evidence" value="ECO:0007669"/>
    <property type="project" value="UniProtKB-UniRule"/>
</dbReference>
<dbReference type="GO" id="GO:0008764">
    <property type="term" value="F:UDP-N-acetylmuramoylalanine-D-glutamate ligase activity"/>
    <property type="evidence" value="ECO:0007669"/>
    <property type="project" value="UniProtKB-UniRule"/>
</dbReference>
<dbReference type="GO" id="GO:0051301">
    <property type="term" value="P:cell division"/>
    <property type="evidence" value="ECO:0007669"/>
    <property type="project" value="UniProtKB-KW"/>
</dbReference>
<dbReference type="GO" id="GO:0071555">
    <property type="term" value="P:cell wall organization"/>
    <property type="evidence" value="ECO:0007669"/>
    <property type="project" value="UniProtKB-KW"/>
</dbReference>
<dbReference type="GO" id="GO:0009252">
    <property type="term" value="P:peptidoglycan biosynthetic process"/>
    <property type="evidence" value="ECO:0007669"/>
    <property type="project" value="UniProtKB-UniRule"/>
</dbReference>
<dbReference type="GO" id="GO:0008360">
    <property type="term" value="P:regulation of cell shape"/>
    <property type="evidence" value="ECO:0007669"/>
    <property type="project" value="UniProtKB-KW"/>
</dbReference>
<dbReference type="Gene3D" id="3.90.190.20">
    <property type="entry name" value="Mur ligase, C-terminal domain"/>
    <property type="match status" value="1"/>
</dbReference>
<dbReference type="Gene3D" id="3.40.1190.10">
    <property type="entry name" value="Mur-like, catalytic domain"/>
    <property type="match status" value="1"/>
</dbReference>
<dbReference type="Gene3D" id="3.40.50.720">
    <property type="entry name" value="NAD(P)-binding Rossmann-like Domain"/>
    <property type="match status" value="1"/>
</dbReference>
<dbReference type="HAMAP" id="MF_00639">
    <property type="entry name" value="MurD"/>
    <property type="match status" value="1"/>
</dbReference>
<dbReference type="InterPro" id="IPR036565">
    <property type="entry name" value="Mur-like_cat_sf"/>
</dbReference>
<dbReference type="InterPro" id="IPR004101">
    <property type="entry name" value="Mur_ligase_C"/>
</dbReference>
<dbReference type="InterPro" id="IPR036615">
    <property type="entry name" value="Mur_ligase_C_dom_sf"/>
</dbReference>
<dbReference type="InterPro" id="IPR013221">
    <property type="entry name" value="Mur_ligase_cen"/>
</dbReference>
<dbReference type="InterPro" id="IPR005762">
    <property type="entry name" value="MurD"/>
</dbReference>
<dbReference type="NCBIfam" id="TIGR01087">
    <property type="entry name" value="murD"/>
    <property type="match status" value="1"/>
</dbReference>
<dbReference type="PANTHER" id="PTHR43692">
    <property type="entry name" value="UDP-N-ACETYLMURAMOYLALANINE--D-GLUTAMATE LIGASE"/>
    <property type="match status" value="1"/>
</dbReference>
<dbReference type="PANTHER" id="PTHR43692:SF1">
    <property type="entry name" value="UDP-N-ACETYLMURAMOYLALANINE--D-GLUTAMATE LIGASE"/>
    <property type="match status" value="1"/>
</dbReference>
<dbReference type="Pfam" id="PF02875">
    <property type="entry name" value="Mur_ligase_C"/>
    <property type="match status" value="1"/>
</dbReference>
<dbReference type="Pfam" id="PF08245">
    <property type="entry name" value="Mur_ligase_M"/>
    <property type="match status" value="1"/>
</dbReference>
<dbReference type="Pfam" id="PF21799">
    <property type="entry name" value="MurD-like_N"/>
    <property type="match status" value="1"/>
</dbReference>
<dbReference type="SUPFAM" id="SSF51984">
    <property type="entry name" value="MurCD N-terminal domain"/>
    <property type="match status" value="1"/>
</dbReference>
<dbReference type="SUPFAM" id="SSF53623">
    <property type="entry name" value="MurD-like peptide ligases, catalytic domain"/>
    <property type="match status" value="1"/>
</dbReference>
<dbReference type="SUPFAM" id="SSF53244">
    <property type="entry name" value="MurD-like peptide ligases, peptide-binding domain"/>
    <property type="match status" value="1"/>
</dbReference>
<name>MURD_STRPS</name>